<dbReference type="EC" id="2.7.11.1"/>
<dbReference type="EMBL" id="AC008017">
    <property type="protein sequence ID" value="AAD55655.1"/>
    <property type="molecule type" value="Genomic_DNA"/>
</dbReference>
<dbReference type="EMBL" id="CP002684">
    <property type="protein sequence ID" value="AEE35411.1"/>
    <property type="molecule type" value="Genomic_DNA"/>
</dbReference>
<dbReference type="EMBL" id="AK117178">
    <property type="protein sequence ID" value="BAC41855.1"/>
    <property type="molecule type" value="mRNA"/>
</dbReference>
<dbReference type="EMBL" id="AY139779">
    <property type="protein sequence ID" value="AAM98097.1"/>
    <property type="molecule type" value="mRNA"/>
</dbReference>
<dbReference type="EMBL" id="FJ708680">
    <property type="protein sequence ID" value="ACN59275.1"/>
    <property type="molecule type" value="mRNA"/>
</dbReference>
<dbReference type="PIR" id="D96756">
    <property type="entry name" value="D96756"/>
</dbReference>
<dbReference type="RefSeq" id="NP_177451.1">
    <property type="nucleotide sequence ID" value="NM_105966.2"/>
</dbReference>
<dbReference type="PDB" id="5GR8">
    <property type="method" value="X-ray"/>
    <property type="resolution" value="2.59 A"/>
    <property type="chains" value="A/D=29-738"/>
</dbReference>
<dbReference type="PDBsum" id="5GR8"/>
<dbReference type="SMR" id="Q9SSL9"/>
<dbReference type="BioGRID" id="28858">
    <property type="interactions" value="23"/>
</dbReference>
<dbReference type="DIP" id="DIP-61207N"/>
<dbReference type="FunCoup" id="Q9SSL9">
    <property type="interactions" value="1443"/>
</dbReference>
<dbReference type="IntAct" id="Q9SSL9">
    <property type="interactions" value="22"/>
</dbReference>
<dbReference type="STRING" id="3702.Q9SSL9"/>
<dbReference type="GlyCosmos" id="Q9SSL9">
    <property type="glycosylation" value="25 sites, No reported glycans"/>
</dbReference>
<dbReference type="GlyGen" id="Q9SSL9">
    <property type="glycosylation" value="27 sites"/>
</dbReference>
<dbReference type="iPTMnet" id="Q9SSL9"/>
<dbReference type="PaxDb" id="3702-AT1G73080.1"/>
<dbReference type="ProteomicsDB" id="236809"/>
<dbReference type="EnsemblPlants" id="AT1G73080.1">
    <property type="protein sequence ID" value="AT1G73080.1"/>
    <property type="gene ID" value="AT1G73080"/>
</dbReference>
<dbReference type="GeneID" id="843639"/>
<dbReference type="Gramene" id="AT1G73080.1">
    <property type="protein sequence ID" value="AT1G73080.1"/>
    <property type="gene ID" value="AT1G73080"/>
</dbReference>
<dbReference type="KEGG" id="ath:AT1G73080"/>
<dbReference type="Araport" id="AT1G73080"/>
<dbReference type="TAIR" id="AT1G73080">
    <property type="gene designation" value="PEPR1"/>
</dbReference>
<dbReference type="eggNOG" id="ENOG502QUAH">
    <property type="taxonomic scope" value="Eukaryota"/>
</dbReference>
<dbReference type="HOGENOM" id="CLU_000288_22_1_1"/>
<dbReference type="InParanoid" id="Q9SSL9"/>
<dbReference type="OMA" id="DWSARYN"/>
<dbReference type="PhylomeDB" id="Q9SSL9"/>
<dbReference type="PRO" id="PR:Q9SSL9"/>
<dbReference type="Proteomes" id="UP000006548">
    <property type="component" value="Chromosome 1"/>
</dbReference>
<dbReference type="ExpressionAtlas" id="Q9SSL9">
    <property type="expression patterns" value="baseline and differential"/>
</dbReference>
<dbReference type="GO" id="GO:0005886">
    <property type="term" value="C:plasma membrane"/>
    <property type="evidence" value="ECO:0007005"/>
    <property type="project" value="TAIR"/>
</dbReference>
<dbReference type="GO" id="GO:0009506">
    <property type="term" value="C:plasmodesma"/>
    <property type="evidence" value="ECO:0007005"/>
    <property type="project" value="TAIR"/>
</dbReference>
<dbReference type="GO" id="GO:0005524">
    <property type="term" value="F:ATP binding"/>
    <property type="evidence" value="ECO:0007669"/>
    <property type="project" value="UniProtKB-KW"/>
</dbReference>
<dbReference type="GO" id="GO:0004383">
    <property type="term" value="F:guanylate cyclase activity"/>
    <property type="evidence" value="ECO:0000314"/>
    <property type="project" value="TAIR"/>
</dbReference>
<dbReference type="GO" id="GO:0001653">
    <property type="term" value="F:peptide receptor activity"/>
    <property type="evidence" value="ECO:0000314"/>
    <property type="project" value="UniProtKB"/>
</dbReference>
<dbReference type="GO" id="GO:0106310">
    <property type="term" value="F:protein serine kinase activity"/>
    <property type="evidence" value="ECO:0007669"/>
    <property type="project" value="RHEA"/>
</dbReference>
<dbReference type="GO" id="GO:0004674">
    <property type="term" value="F:protein serine/threonine kinase activity"/>
    <property type="evidence" value="ECO:0007669"/>
    <property type="project" value="UniProtKB-KW"/>
</dbReference>
<dbReference type="GO" id="GO:0006955">
    <property type="term" value="P:immune response"/>
    <property type="evidence" value="ECO:0000315"/>
    <property type="project" value="TAIR"/>
</dbReference>
<dbReference type="GO" id="GO:0045087">
    <property type="term" value="P:innate immune response"/>
    <property type="evidence" value="ECO:0000304"/>
    <property type="project" value="TAIR"/>
</dbReference>
<dbReference type="GO" id="GO:0009753">
    <property type="term" value="P:response to jasmonic acid"/>
    <property type="evidence" value="ECO:0000270"/>
    <property type="project" value="TAIR"/>
</dbReference>
<dbReference type="GO" id="GO:0009611">
    <property type="term" value="P:response to wounding"/>
    <property type="evidence" value="ECO:0000270"/>
    <property type="project" value="TAIR"/>
</dbReference>
<dbReference type="FunFam" id="3.80.10.10:FF:000430">
    <property type="entry name" value="Leucine-rich repeat receptor-like protein kinase PEPR1"/>
    <property type="match status" value="1"/>
</dbReference>
<dbReference type="FunFam" id="3.80.10.10:FF:000919">
    <property type="entry name" value="Leucine-rich repeat receptor-like protein kinase PEPR1"/>
    <property type="match status" value="1"/>
</dbReference>
<dbReference type="FunFam" id="3.80.10.10:FF:001936">
    <property type="entry name" value="Leucine-rich repeat receptor-like protein kinase PEPR1"/>
    <property type="match status" value="1"/>
</dbReference>
<dbReference type="FunFam" id="3.30.200.20:FF:000260">
    <property type="entry name" value="LRR receptor-like serine/threonine-protein kinase RPK2"/>
    <property type="match status" value="1"/>
</dbReference>
<dbReference type="FunFam" id="3.80.10.10:FF:000299">
    <property type="entry name" value="Piriformospora indica-insensitive protein 2"/>
    <property type="match status" value="1"/>
</dbReference>
<dbReference type="FunFam" id="1.10.510.10:FF:000569">
    <property type="entry name" value="Serine/threonine-protein kinase-like protein CCR4"/>
    <property type="match status" value="1"/>
</dbReference>
<dbReference type="Gene3D" id="3.30.200.20">
    <property type="entry name" value="Phosphorylase Kinase, domain 1"/>
    <property type="match status" value="1"/>
</dbReference>
<dbReference type="Gene3D" id="3.80.10.10">
    <property type="entry name" value="Ribonuclease Inhibitor"/>
    <property type="match status" value="4"/>
</dbReference>
<dbReference type="Gene3D" id="1.10.510.10">
    <property type="entry name" value="Transferase(Phosphotransferase) domain 1"/>
    <property type="match status" value="1"/>
</dbReference>
<dbReference type="InterPro" id="IPR011009">
    <property type="entry name" value="Kinase-like_dom_sf"/>
</dbReference>
<dbReference type="InterPro" id="IPR001611">
    <property type="entry name" value="Leu-rich_rpt"/>
</dbReference>
<dbReference type="InterPro" id="IPR003591">
    <property type="entry name" value="Leu-rich_rpt_typical-subtyp"/>
</dbReference>
<dbReference type="InterPro" id="IPR032675">
    <property type="entry name" value="LRR_dom_sf"/>
</dbReference>
<dbReference type="InterPro" id="IPR013210">
    <property type="entry name" value="LRR_N_plant-typ"/>
</dbReference>
<dbReference type="InterPro" id="IPR051716">
    <property type="entry name" value="Plant_RL_S/T_kinase"/>
</dbReference>
<dbReference type="InterPro" id="IPR000719">
    <property type="entry name" value="Prot_kinase_dom"/>
</dbReference>
<dbReference type="InterPro" id="IPR017441">
    <property type="entry name" value="Protein_kinase_ATP_BS"/>
</dbReference>
<dbReference type="InterPro" id="IPR008271">
    <property type="entry name" value="Ser/Thr_kinase_AS"/>
</dbReference>
<dbReference type="PANTHER" id="PTHR48053">
    <property type="entry name" value="LEUCINE RICH REPEAT FAMILY PROTEIN, EXPRESSED"/>
    <property type="match status" value="1"/>
</dbReference>
<dbReference type="PANTHER" id="PTHR48053:SF113">
    <property type="entry name" value="PROTEIN KINASE DOMAIN-CONTAINING PROTEIN"/>
    <property type="match status" value="1"/>
</dbReference>
<dbReference type="Pfam" id="PF00560">
    <property type="entry name" value="LRR_1"/>
    <property type="match status" value="12"/>
</dbReference>
<dbReference type="Pfam" id="PF13855">
    <property type="entry name" value="LRR_8"/>
    <property type="match status" value="1"/>
</dbReference>
<dbReference type="Pfam" id="PF08263">
    <property type="entry name" value="LRRNT_2"/>
    <property type="match status" value="1"/>
</dbReference>
<dbReference type="Pfam" id="PF00069">
    <property type="entry name" value="Pkinase"/>
    <property type="match status" value="1"/>
</dbReference>
<dbReference type="SMART" id="SM00369">
    <property type="entry name" value="LRR_TYP"/>
    <property type="match status" value="9"/>
</dbReference>
<dbReference type="SMART" id="SM00220">
    <property type="entry name" value="S_TKc"/>
    <property type="match status" value="1"/>
</dbReference>
<dbReference type="SUPFAM" id="SSF56112">
    <property type="entry name" value="Protein kinase-like (PK-like)"/>
    <property type="match status" value="1"/>
</dbReference>
<dbReference type="SUPFAM" id="SSF52047">
    <property type="entry name" value="RNI-like"/>
    <property type="match status" value="2"/>
</dbReference>
<dbReference type="PROSITE" id="PS51450">
    <property type="entry name" value="LRR"/>
    <property type="match status" value="14"/>
</dbReference>
<dbReference type="PROSITE" id="PS00107">
    <property type="entry name" value="PROTEIN_KINASE_ATP"/>
    <property type="match status" value="1"/>
</dbReference>
<dbReference type="PROSITE" id="PS50011">
    <property type="entry name" value="PROTEIN_KINASE_DOM"/>
    <property type="match status" value="1"/>
</dbReference>
<dbReference type="PROSITE" id="PS00108">
    <property type="entry name" value="PROTEIN_KINASE_ST"/>
    <property type="match status" value="1"/>
</dbReference>
<keyword id="KW-0002">3D-structure</keyword>
<keyword id="KW-0067">ATP-binding</keyword>
<keyword id="KW-1003">Cell membrane</keyword>
<keyword id="KW-0325">Glycoprotein</keyword>
<keyword id="KW-0418">Kinase</keyword>
<keyword id="KW-0433">Leucine-rich repeat</keyword>
<keyword id="KW-0472">Membrane</keyword>
<keyword id="KW-0547">Nucleotide-binding</keyword>
<keyword id="KW-0597">Phosphoprotein</keyword>
<keyword id="KW-0611">Plant defense</keyword>
<keyword id="KW-0675">Receptor</keyword>
<keyword id="KW-1185">Reference proteome</keyword>
<keyword id="KW-0677">Repeat</keyword>
<keyword id="KW-0723">Serine/threonine-protein kinase</keyword>
<keyword id="KW-0732">Signal</keyword>
<keyword id="KW-0808">Transferase</keyword>
<keyword id="KW-0812">Transmembrane</keyword>
<keyword id="KW-1133">Transmembrane helix</keyword>
<gene>
    <name type="primary">PEPR1</name>
    <name type="ordered locus">At1g73080</name>
    <name type="ORF">F3N23.28</name>
</gene>
<comment type="function">
    <text evidence="6 9">Acts as a receptor for PEP defense peptides. Unlike typical immune receptors, senses an endogenous elicitor that potentiates pathogen-associated molecular pattern (PAMP)-inducible plant responses. Involved in PAMP-triggered immunity (PTI) signaling. Interacts with and phosphorylates the kinase BIK1, a central rate-limiting kinase in PTI signaling (PubMed:23431184).</text>
</comment>
<comment type="catalytic activity">
    <reaction>
        <text>L-seryl-[protein] + ATP = O-phospho-L-seryl-[protein] + ADP + H(+)</text>
        <dbReference type="Rhea" id="RHEA:17989"/>
        <dbReference type="Rhea" id="RHEA-COMP:9863"/>
        <dbReference type="Rhea" id="RHEA-COMP:11604"/>
        <dbReference type="ChEBI" id="CHEBI:15378"/>
        <dbReference type="ChEBI" id="CHEBI:29999"/>
        <dbReference type="ChEBI" id="CHEBI:30616"/>
        <dbReference type="ChEBI" id="CHEBI:83421"/>
        <dbReference type="ChEBI" id="CHEBI:456216"/>
        <dbReference type="EC" id="2.7.11.1"/>
    </reaction>
</comment>
<comment type="catalytic activity">
    <reaction>
        <text>L-threonyl-[protein] + ATP = O-phospho-L-threonyl-[protein] + ADP + H(+)</text>
        <dbReference type="Rhea" id="RHEA:46608"/>
        <dbReference type="Rhea" id="RHEA-COMP:11060"/>
        <dbReference type="Rhea" id="RHEA-COMP:11605"/>
        <dbReference type="ChEBI" id="CHEBI:15378"/>
        <dbReference type="ChEBI" id="CHEBI:30013"/>
        <dbReference type="ChEBI" id="CHEBI:30616"/>
        <dbReference type="ChEBI" id="CHEBI:61977"/>
        <dbReference type="ChEBI" id="CHEBI:456216"/>
        <dbReference type="EC" id="2.7.11.1"/>
    </reaction>
</comment>
<comment type="subunit">
    <text evidence="6 7 8 9">Interacts with PEP1 and BAK1 (PubMed:16785433, PubMed:18824048, PubMed:20018402). Interacts with BIK1 and PBL1 (PubMed:23431184).</text>
</comment>
<comment type="interaction">
    <interactant intactId="EBI-15588112">
        <id>Q9SSL9</id>
    </interactant>
    <interactant intactId="EBI-16934827">
        <id>Q8W4S5</id>
        <label>At5g63710</label>
    </interactant>
    <organismsDiffer>false</organismsDiffer>
    <experiments>5</experiments>
</comment>
<comment type="subcellular location">
    <subcellularLocation>
        <location evidence="11">Cell membrane</location>
        <topology evidence="11">Single-pass type I membrane protein</topology>
    </subcellularLocation>
</comment>
<comment type="PTM">
    <text evidence="6">N-glycosylated.</text>
</comment>
<comment type="similarity">
    <text evidence="4">Belongs to the protein kinase superfamily. Ser/Thr protein kinase family.</text>
</comment>
<organism>
    <name type="scientific">Arabidopsis thaliana</name>
    <name type="common">Mouse-ear cress</name>
    <dbReference type="NCBI Taxonomy" id="3702"/>
    <lineage>
        <taxon>Eukaryota</taxon>
        <taxon>Viridiplantae</taxon>
        <taxon>Streptophyta</taxon>
        <taxon>Embryophyta</taxon>
        <taxon>Tracheophyta</taxon>
        <taxon>Spermatophyta</taxon>
        <taxon>Magnoliopsida</taxon>
        <taxon>eudicotyledons</taxon>
        <taxon>Gunneridae</taxon>
        <taxon>Pentapetalae</taxon>
        <taxon>rosids</taxon>
        <taxon>malvids</taxon>
        <taxon>Brassicales</taxon>
        <taxon>Brassicaceae</taxon>
        <taxon>Camelineae</taxon>
        <taxon>Arabidopsis</taxon>
    </lineage>
</organism>
<reference key="1">
    <citation type="journal article" date="2000" name="Nature">
        <title>Sequence and analysis of chromosome 1 of the plant Arabidopsis thaliana.</title>
        <authorList>
            <person name="Theologis A."/>
            <person name="Ecker J.R."/>
            <person name="Palm C.J."/>
            <person name="Federspiel N.A."/>
            <person name="Kaul S."/>
            <person name="White O."/>
            <person name="Alonso J."/>
            <person name="Altafi H."/>
            <person name="Araujo R."/>
            <person name="Bowman C.L."/>
            <person name="Brooks S.Y."/>
            <person name="Buehler E."/>
            <person name="Chan A."/>
            <person name="Chao Q."/>
            <person name="Chen H."/>
            <person name="Cheuk R.F."/>
            <person name="Chin C.W."/>
            <person name="Chung M.K."/>
            <person name="Conn L."/>
            <person name="Conway A.B."/>
            <person name="Conway A.R."/>
            <person name="Creasy T.H."/>
            <person name="Dewar K."/>
            <person name="Dunn P."/>
            <person name="Etgu P."/>
            <person name="Feldblyum T.V."/>
            <person name="Feng J.-D."/>
            <person name="Fong B."/>
            <person name="Fujii C.Y."/>
            <person name="Gill J.E."/>
            <person name="Goldsmith A.D."/>
            <person name="Haas B."/>
            <person name="Hansen N.F."/>
            <person name="Hughes B."/>
            <person name="Huizar L."/>
            <person name="Hunter J.L."/>
            <person name="Jenkins J."/>
            <person name="Johnson-Hopson C."/>
            <person name="Khan S."/>
            <person name="Khaykin E."/>
            <person name="Kim C.J."/>
            <person name="Koo H.L."/>
            <person name="Kremenetskaia I."/>
            <person name="Kurtz D.B."/>
            <person name="Kwan A."/>
            <person name="Lam B."/>
            <person name="Langin-Hooper S."/>
            <person name="Lee A."/>
            <person name="Lee J.M."/>
            <person name="Lenz C.A."/>
            <person name="Li J.H."/>
            <person name="Li Y.-P."/>
            <person name="Lin X."/>
            <person name="Liu S.X."/>
            <person name="Liu Z.A."/>
            <person name="Luros J.S."/>
            <person name="Maiti R."/>
            <person name="Marziali A."/>
            <person name="Militscher J."/>
            <person name="Miranda M."/>
            <person name="Nguyen M."/>
            <person name="Nierman W.C."/>
            <person name="Osborne B.I."/>
            <person name="Pai G."/>
            <person name="Peterson J."/>
            <person name="Pham P.K."/>
            <person name="Rizzo M."/>
            <person name="Rooney T."/>
            <person name="Rowley D."/>
            <person name="Sakano H."/>
            <person name="Salzberg S.L."/>
            <person name="Schwartz J.R."/>
            <person name="Shinn P."/>
            <person name="Southwick A.M."/>
            <person name="Sun H."/>
            <person name="Tallon L.J."/>
            <person name="Tambunga G."/>
            <person name="Toriumi M.J."/>
            <person name="Town C.D."/>
            <person name="Utterback T."/>
            <person name="Van Aken S."/>
            <person name="Vaysberg M."/>
            <person name="Vysotskaia V.S."/>
            <person name="Walker M."/>
            <person name="Wu D."/>
            <person name="Yu G."/>
            <person name="Fraser C.M."/>
            <person name="Venter J.C."/>
            <person name="Davis R.W."/>
        </authorList>
    </citation>
    <scope>NUCLEOTIDE SEQUENCE [LARGE SCALE GENOMIC DNA]</scope>
    <source>
        <strain>cv. Columbia</strain>
    </source>
</reference>
<reference key="2">
    <citation type="journal article" date="2017" name="Plant J.">
        <title>Araport11: a complete reannotation of the Arabidopsis thaliana reference genome.</title>
        <authorList>
            <person name="Cheng C.Y."/>
            <person name="Krishnakumar V."/>
            <person name="Chan A.P."/>
            <person name="Thibaud-Nissen F."/>
            <person name="Schobel S."/>
            <person name="Town C.D."/>
        </authorList>
    </citation>
    <scope>GENOME REANNOTATION</scope>
    <source>
        <strain>cv. Columbia</strain>
    </source>
</reference>
<reference key="3">
    <citation type="journal article" date="2002" name="Science">
        <title>Functional annotation of a full-length Arabidopsis cDNA collection.</title>
        <authorList>
            <person name="Seki M."/>
            <person name="Narusaka M."/>
            <person name="Kamiya A."/>
            <person name="Ishida J."/>
            <person name="Satou M."/>
            <person name="Sakurai T."/>
            <person name="Nakajima M."/>
            <person name="Enju A."/>
            <person name="Akiyama K."/>
            <person name="Oono Y."/>
            <person name="Muramatsu M."/>
            <person name="Hayashizaki Y."/>
            <person name="Kawai J."/>
            <person name="Carninci P."/>
            <person name="Itoh M."/>
            <person name="Ishii Y."/>
            <person name="Arakawa T."/>
            <person name="Shibata K."/>
            <person name="Shinagawa A."/>
            <person name="Shinozaki K."/>
        </authorList>
    </citation>
    <scope>NUCLEOTIDE SEQUENCE [LARGE SCALE MRNA]</scope>
    <source>
        <strain>cv. Columbia</strain>
    </source>
</reference>
<reference key="4">
    <citation type="journal article" date="2003" name="Science">
        <title>Empirical analysis of transcriptional activity in the Arabidopsis genome.</title>
        <authorList>
            <person name="Yamada K."/>
            <person name="Lim J."/>
            <person name="Dale J.M."/>
            <person name="Chen H."/>
            <person name="Shinn P."/>
            <person name="Palm C.J."/>
            <person name="Southwick A.M."/>
            <person name="Wu H.C."/>
            <person name="Kim C.J."/>
            <person name="Nguyen M."/>
            <person name="Pham P.K."/>
            <person name="Cheuk R.F."/>
            <person name="Karlin-Newmann G."/>
            <person name="Liu S.X."/>
            <person name="Lam B."/>
            <person name="Sakano H."/>
            <person name="Wu T."/>
            <person name="Yu G."/>
            <person name="Miranda M."/>
            <person name="Quach H.L."/>
            <person name="Tripp M."/>
            <person name="Chang C.H."/>
            <person name="Lee J.M."/>
            <person name="Toriumi M.J."/>
            <person name="Chan M.M."/>
            <person name="Tang C.C."/>
            <person name="Onodera C.S."/>
            <person name="Deng J.M."/>
            <person name="Akiyama K."/>
            <person name="Ansari Y."/>
            <person name="Arakawa T."/>
            <person name="Banh J."/>
            <person name="Banno F."/>
            <person name="Bowser L."/>
            <person name="Brooks S.Y."/>
            <person name="Carninci P."/>
            <person name="Chao Q."/>
            <person name="Choy N."/>
            <person name="Enju A."/>
            <person name="Goldsmith A.D."/>
            <person name="Gurjal M."/>
            <person name="Hansen N.F."/>
            <person name="Hayashizaki Y."/>
            <person name="Johnson-Hopson C."/>
            <person name="Hsuan V.W."/>
            <person name="Iida K."/>
            <person name="Karnes M."/>
            <person name="Khan S."/>
            <person name="Koesema E."/>
            <person name="Ishida J."/>
            <person name="Jiang P.X."/>
            <person name="Jones T."/>
            <person name="Kawai J."/>
            <person name="Kamiya A."/>
            <person name="Meyers C."/>
            <person name="Nakajima M."/>
            <person name="Narusaka M."/>
            <person name="Seki M."/>
            <person name="Sakurai T."/>
            <person name="Satou M."/>
            <person name="Tamse R."/>
            <person name="Vaysberg M."/>
            <person name="Wallender E.K."/>
            <person name="Wong C."/>
            <person name="Yamamura Y."/>
            <person name="Yuan S."/>
            <person name="Shinozaki K."/>
            <person name="Davis R.W."/>
            <person name="Theologis A."/>
            <person name="Ecker J.R."/>
        </authorList>
    </citation>
    <scope>NUCLEOTIDE SEQUENCE [LARGE SCALE MRNA]</scope>
    <source>
        <strain>cv. Columbia</strain>
    </source>
</reference>
<reference key="5">
    <citation type="journal article" date="2010" name="BMC Genomics">
        <title>Genome-wide cloning and sequence analysis of leucine-rich repeat receptor-like protein kinase genes in Arabidopsis thaliana.</title>
        <authorList>
            <person name="Gou X."/>
            <person name="He K."/>
            <person name="Yang H."/>
            <person name="Yuan T."/>
            <person name="Lin H."/>
            <person name="Clouse S.D."/>
            <person name="Li J."/>
        </authorList>
    </citation>
    <scope>NUCLEOTIDE SEQUENCE [LARGE SCALE MRNA]</scope>
    <source>
        <strain>cv. Columbia</strain>
    </source>
</reference>
<reference key="6">
    <citation type="journal article" date="2006" name="Proc. Natl. Acad. Sci. U.S.A.">
        <title>The cell surface leucine-rich repeat receptor for AtPep1, an endogenous peptide elicitor in Arabidopsis, is functional in transgenic tobacco cells.</title>
        <authorList>
            <person name="Yamaguchi Y."/>
            <person name="Pearce G."/>
            <person name="Ryan C.A."/>
        </authorList>
    </citation>
    <scope>FUNCTION</scope>
    <scope>IDENTIFICATION BY MASS SPECTROMETRY</scope>
    <scope>GLYCOSYLATION</scope>
    <scope>INTERACTION WITH PEP1</scope>
</reference>
<reference key="7">
    <citation type="journal article" date="2007" name="Mol. Cell. Proteomics">
        <title>A high content in lipid-modified peripheral proteins and integral receptor kinases features in the arabidopsis plasma membrane proteome.</title>
        <authorList>
            <person name="Marmagne A."/>
            <person name="Ferro M."/>
            <person name="Meinnel T."/>
            <person name="Bruley C."/>
            <person name="Kuhn L."/>
            <person name="Garin J."/>
            <person name="Barbier-Brygoo H."/>
            <person name="Ephritikhine G."/>
        </authorList>
    </citation>
    <scope>IDENTIFICATION BY MASS SPECTROMETRY</scope>
    <scope>SUBCELLULAR LOCATION [LARGE SCALE ANALYSIS]</scope>
</reference>
<reference key="8">
    <citation type="journal article" date="2008" name="Peptides">
        <title>Structure-activity studies of AtPep1, a plant peptide signal involved in the innate immune response.</title>
        <authorList>
            <person name="Pearce G."/>
            <person name="Yamaguchi Y."/>
            <person name="Munske G."/>
            <person name="Ryan C.A."/>
        </authorList>
    </citation>
    <scope>INTERACTION WITH PEP1</scope>
</reference>
<reference key="9">
    <citation type="journal article" date="2010" name="Eur. J. Cell Biol.">
        <title>The multifunctional leucine-rich repeat receptor kinase BAK1 is implicated in Arabidopsis development and immunity.</title>
        <authorList>
            <person name="Postel S."/>
            <person name="Kuefner I."/>
            <person name="Beuter C."/>
            <person name="Mazzotta S."/>
            <person name="Schwedt A."/>
            <person name="Borlotti A."/>
            <person name="Halter T."/>
            <person name="Kemmerling B."/>
            <person name="Nuernberger T."/>
        </authorList>
    </citation>
    <scope>INTERACTION WITH BAK1</scope>
</reference>
<reference key="10">
    <citation type="journal article" date="2013" name="Proc. Natl. Acad. Sci. U.S.A.">
        <title>BIK1 interacts with PEPRs to mediate ethylene-induced immunity.</title>
        <authorList>
            <person name="Liu Z."/>
            <person name="Wu Y."/>
            <person name="Yang F."/>
            <person name="Zhang Y."/>
            <person name="Chen S."/>
            <person name="Xie Q."/>
            <person name="Tian X."/>
            <person name="Zhou J.M."/>
        </authorList>
    </citation>
    <scope>FUNCTION</scope>
    <scope>INTERACTION WITH BIK1 AND PBL1</scope>
</reference>
<evidence type="ECO:0000250" key="1">
    <source>
        <dbReference type="UniProtKB" id="C0LGT6"/>
    </source>
</evidence>
<evidence type="ECO:0000250" key="2">
    <source>
        <dbReference type="UniProtKB" id="O22476"/>
    </source>
</evidence>
<evidence type="ECO:0000255" key="3"/>
<evidence type="ECO:0000255" key="4">
    <source>
        <dbReference type="PROSITE-ProRule" id="PRU00159"/>
    </source>
</evidence>
<evidence type="ECO:0000255" key="5">
    <source>
        <dbReference type="PROSITE-ProRule" id="PRU10027"/>
    </source>
</evidence>
<evidence type="ECO:0000269" key="6">
    <source>
    </source>
</evidence>
<evidence type="ECO:0000269" key="7">
    <source>
    </source>
</evidence>
<evidence type="ECO:0000269" key="8">
    <source>
    </source>
</evidence>
<evidence type="ECO:0000269" key="9">
    <source>
    </source>
</evidence>
<evidence type="ECO:0000305" key="10"/>
<evidence type="ECO:0000305" key="11">
    <source>
    </source>
</evidence>
<evidence type="ECO:0007829" key="12">
    <source>
        <dbReference type="PDB" id="5GR8"/>
    </source>
</evidence>
<feature type="signal peptide" evidence="3">
    <location>
        <begin position="1"/>
        <end position="28"/>
    </location>
</feature>
<feature type="chain" id="PRO_0000389459" description="Leucine-rich repeat receptor-like protein kinase PEPR1">
    <location>
        <begin position="29"/>
        <end position="1123"/>
    </location>
</feature>
<feature type="topological domain" description="Extracellular" evidence="3">
    <location>
        <begin position="29"/>
        <end position="769"/>
    </location>
</feature>
<feature type="transmembrane region" description="Helical" evidence="3">
    <location>
        <begin position="770"/>
        <end position="790"/>
    </location>
</feature>
<feature type="topological domain" description="Cytoplasmic" evidence="3">
    <location>
        <begin position="791"/>
        <end position="1123"/>
    </location>
</feature>
<feature type="repeat" description="LRR 1">
    <location>
        <begin position="31"/>
        <end position="53"/>
    </location>
</feature>
<feature type="repeat" description="LRR 2">
    <location>
        <begin position="74"/>
        <end position="98"/>
    </location>
</feature>
<feature type="repeat" description="LRR 3">
    <location>
        <begin position="99"/>
        <end position="122"/>
    </location>
</feature>
<feature type="repeat" description="LRR 4">
    <location>
        <begin position="124"/>
        <end position="145"/>
    </location>
</feature>
<feature type="repeat" description="LRR 5">
    <location>
        <begin position="146"/>
        <end position="170"/>
    </location>
</feature>
<feature type="repeat" description="LRR 6">
    <location>
        <begin position="171"/>
        <end position="194"/>
    </location>
</feature>
<feature type="repeat" description="LRR 7">
    <location>
        <begin position="196"/>
        <end position="218"/>
    </location>
</feature>
<feature type="repeat" description="LRR 8">
    <location>
        <begin position="219"/>
        <end position="243"/>
    </location>
</feature>
<feature type="repeat" description="LRR 9">
    <location>
        <begin position="245"/>
        <end position="266"/>
    </location>
</feature>
<feature type="repeat" description="LRR 10">
    <location>
        <begin position="267"/>
        <end position="290"/>
    </location>
</feature>
<feature type="repeat" description="LRR 11">
    <location>
        <begin position="292"/>
        <end position="314"/>
    </location>
</feature>
<feature type="repeat" description="LRR 12">
    <location>
        <begin position="315"/>
        <end position="338"/>
    </location>
</feature>
<feature type="repeat" description="LRR 13">
    <location>
        <begin position="340"/>
        <end position="362"/>
    </location>
</feature>
<feature type="repeat" description="LRR 14">
    <location>
        <begin position="363"/>
        <end position="386"/>
    </location>
</feature>
<feature type="repeat" description="LRR 15">
    <location>
        <begin position="388"/>
        <end position="410"/>
    </location>
</feature>
<feature type="repeat" description="LRR 16">
    <location>
        <begin position="412"/>
        <end position="434"/>
    </location>
</feature>
<feature type="repeat" description="LRR 17">
    <location>
        <begin position="435"/>
        <end position="458"/>
    </location>
</feature>
<feature type="repeat" description="LRR 18">
    <location>
        <begin position="459"/>
        <end position="482"/>
    </location>
</feature>
<feature type="repeat" description="LRR 19">
    <location>
        <begin position="484"/>
        <end position="505"/>
    </location>
</feature>
<feature type="repeat" description="LRR 20">
    <location>
        <begin position="506"/>
        <end position="529"/>
    </location>
</feature>
<feature type="repeat" description="LRR 21">
    <location>
        <begin position="530"/>
        <end position="553"/>
    </location>
</feature>
<feature type="repeat" description="LRR 22">
    <location>
        <begin position="554"/>
        <end position="577"/>
    </location>
</feature>
<feature type="repeat" description="LRR 23">
    <location>
        <begin position="579"/>
        <end position="600"/>
    </location>
</feature>
<feature type="repeat" description="LRR 24">
    <location>
        <begin position="601"/>
        <end position="625"/>
    </location>
</feature>
<feature type="repeat" description="LRR 25">
    <location>
        <begin position="626"/>
        <end position="650"/>
    </location>
</feature>
<feature type="repeat" description="LRR 26">
    <location>
        <begin position="652"/>
        <end position="674"/>
    </location>
</feature>
<feature type="repeat" description="LRR 27">
    <location>
        <begin position="675"/>
        <end position="696"/>
    </location>
</feature>
<feature type="repeat" description="LRR 28">
    <location>
        <begin position="697"/>
        <end position="721"/>
    </location>
</feature>
<feature type="domain" description="Protein kinase" evidence="4">
    <location>
        <begin position="827"/>
        <end position="1115"/>
    </location>
</feature>
<feature type="active site" description="Proton acceptor" evidence="4 5">
    <location>
        <position position="954"/>
    </location>
</feature>
<feature type="binding site" evidence="4">
    <location>
        <begin position="833"/>
        <end position="841"/>
    </location>
    <ligand>
        <name>ATP</name>
        <dbReference type="ChEBI" id="CHEBI:30616"/>
    </ligand>
</feature>
<feature type="binding site" evidence="4">
    <location>
        <position position="855"/>
    </location>
    <ligand>
        <name>ATP</name>
        <dbReference type="ChEBI" id="CHEBI:30616"/>
    </ligand>
</feature>
<feature type="modified residue" description="Phosphothreonine" evidence="2">
    <location>
        <position position="824"/>
    </location>
</feature>
<feature type="modified residue" description="Phosphotyrosine" evidence="2">
    <location>
        <position position="901"/>
    </location>
</feature>
<feature type="modified residue" description="Phosphotyrosine" evidence="1">
    <location>
        <position position="941"/>
    </location>
</feature>
<feature type="modified residue" description="Phosphotyrosine" evidence="1">
    <location>
        <position position="995"/>
    </location>
</feature>
<feature type="glycosylation site" description="N-linked (GlcNAc...) asparagine" evidence="3">
    <location>
        <position position="57"/>
    </location>
</feature>
<feature type="glycosylation site" description="N-linked (GlcNAc...) asparagine" evidence="3">
    <location>
        <position position="81"/>
    </location>
</feature>
<feature type="glycosylation site" description="N-linked (GlcNAc...) asparagine" evidence="3">
    <location>
        <position position="110"/>
    </location>
</feature>
<feature type="glycosylation site" description="N-linked (GlcNAc...) asparagine" evidence="3">
    <location>
        <position position="121"/>
    </location>
</feature>
<feature type="glycosylation site" description="N-linked (GlcNAc...) asparagine" evidence="3">
    <location>
        <position position="182"/>
    </location>
</feature>
<feature type="glycosylation site" description="N-linked (GlcNAc...) asparagine" evidence="3">
    <location>
        <position position="217"/>
    </location>
</feature>
<feature type="glycosylation site" description="N-linked (GlcNAc...) asparagine" evidence="3">
    <location>
        <position position="244"/>
    </location>
</feature>
<feature type="glycosylation site" description="N-linked (GlcNAc...) asparagine" evidence="3">
    <location>
        <position position="252"/>
    </location>
</feature>
<feature type="glycosylation site" description="N-linked (GlcNAc...) asparagine" evidence="3">
    <location>
        <position position="289"/>
    </location>
</feature>
<feature type="glycosylation site" description="N-linked (GlcNAc...) asparagine" evidence="3">
    <location>
        <position position="302"/>
    </location>
</feature>
<feature type="glycosylation site" description="N-linked (GlcNAc...) asparagine" evidence="3">
    <location>
        <position position="316"/>
    </location>
</feature>
<feature type="glycosylation site" description="N-linked (GlcNAc...) asparagine" evidence="3">
    <location>
        <position position="321"/>
    </location>
</feature>
<feature type="glycosylation site" description="N-linked (GlcNAc...) asparagine" evidence="3">
    <location>
        <position position="337"/>
    </location>
</feature>
<feature type="glycosylation site" description="N-linked (GlcNAc...) asparagine" evidence="3">
    <location>
        <position position="398"/>
    </location>
</feature>
<feature type="glycosylation site" description="N-linked (GlcNAc...) asparagine" evidence="3">
    <location>
        <position position="420"/>
    </location>
</feature>
<feature type="glycosylation site" description="N-linked (GlcNAc...) asparagine" evidence="3">
    <location>
        <position position="434"/>
    </location>
</feature>
<feature type="glycosylation site" description="N-linked (GlcNAc...) asparagine" evidence="3">
    <location>
        <position position="494"/>
    </location>
</feature>
<feature type="glycosylation site" description="N-linked (GlcNAc...) asparagine" evidence="3">
    <location>
        <position position="531"/>
    </location>
</feature>
<feature type="glycosylation site" description="N-linked (GlcNAc...) asparagine" evidence="3">
    <location>
        <position position="536"/>
    </location>
</feature>
<feature type="glycosylation site" description="N-linked (GlcNAc...) asparagine" evidence="3">
    <location>
        <position position="560"/>
    </location>
</feature>
<feature type="glycosylation site" description="N-linked (GlcNAc...) asparagine" evidence="3">
    <location>
        <position position="591"/>
    </location>
</feature>
<feature type="glycosylation site" description="N-linked (GlcNAc...) asparagine" evidence="3">
    <location>
        <position position="597"/>
    </location>
</feature>
<feature type="glycosylation site" description="N-linked (GlcNAc...) asparagine" evidence="3">
    <location>
        <position position="681"/>
    </location>
</feature>
<feature type="glycosylation site" description="N-linked (GlcNAc...) asparagine" evidence="3">
    <location>
        <position position="686"/>
    </location>
</feature>
<feature type="glycosylation site" description="N-linked (GlcNAc...) asparagine" evidence="3">
    <location>
        <position position="745"/>
    </location>
</feature>
<feature type="sequence conflict" description="In Ref. 4; AAM98097." evidence="10" ref="4">
    <original>G</original>
    <variation>E</variation>
    <location>
        <position position="288"/>
    </location>
</feature>
<feature type="sequence conflict" description="In Ref. 3; BAC41855." evidence="10" ref="3">
    <original>N</original>
    <variation>D</variation>
    <location>
        <position position="746"/>
    </location>
</feature>
<feature type="helix" evidence="12">
    <location>
        <begin position="31"/>
        <end position="40"/>
    </location>
</feature>
<feature type="strand" evidence="12">
    <location>
        <begin position="43"/>
        <end position="45"/>
    </location>
</feature>
<feature type="helix" evidence="12">
    <location>
        <begin position="48"/>
        <end position="53"/>
    </location>
</feature>
<feature type="strand" evidence="12">
    <location>
        <begin position="69"/>
        <end position="71"/>
    </location>
</feature>
<feature type="strand" evidence="12">
    <location>
        <begin position="75"/>
        <end position="81"/>
    </location>
</feature>
<feature type="helix" evidence="12">
    <location>
        <begin position="93"/>
        <end position="97"/>
    </location>
</feature>
<feature type="strand" evidence="12">
    <location>
        <begin position="103"/>
        <end position="105"/>
    </location>
</feature>
<feature type="strand" evidence="12">
    <location>
        <begin position="108"/>
        <end position="111"/>
    </location>
</feature>
<feature type="helix" evidence="12">
    <location>
        <begin position="117"/>
        <end position="121"/>
    </location>
</feature>
<feature type="strand" evidence="12">
    <location>
        <begin position="127"/>
        <end position="129"/>
    </location>
</feature>
<feature type="helix" evidence="12">
    <location>
        <begin position="143"/>
        <end position="145"/>
    </location>
</feature>
<feature type="strand" evidence="12">
    <location>
        <begin position="151"/>
        <end position="153"/>
    </location>
</feature>
<feature type="strand" evidence="12">
    <location>
        <begin position="156"/>
        <end position="161"/>
    </location>
</feature>
<feature type="helix" evidence="12">
    <location>
        <begin position="165"/>
        <end position="169"/>
    </location>
</feature>
<feature type="strand" evidence="12">
    <location>
        <begin position="175"/>
        <end position="177"/>
    </location>
</feature>
<feature type="strand" evidence="12">
    <location>
        <begin position="180"/>
        <end position="185"/>
    </location>
</feature>
<feature type="helix" evidence="12">
    <location>
        <begin position="189"/>
        <end position="193"/>
    </location>
</feature>
<feature type="strand" evidence="12">
    <location>
        <begin position="199"/>
        <end position="201"/>
    </location>
</feature>
<feature type="strand" evidence="12">
    <location>
        <begin position="204"/>
        <end position="210"/>
    </location>
</feature>
<feature type="helix" evidence="12">
    <location>
        <begin position="213"/>
        <end position="217"/>
    </location>
</feature>
<feature type="strand" evidence="12">
    <location>
        <begin position="223"/>
        <end position="225"/>
    </location>
</feature>
<feature type="strand" evidence="12">
    <location>
        <begin position="228"/>
        <end position="233"/>
    </location>
</feature>
<feature type="helix" evidence="12">
    <location>
        <begin position="237"/>
        <end position="241"/>
    </location>
</feature>
<feature type="strand" evidence="12">
    <location>
        <begin position="247"/>
        <end position="249"/>
    </location>
</feature>
<feature type="strand" evidence="12">
    <location>
        <begin position="263"/>
        <end position="265"/>
    </location>
</feature>
<feature type="strand" evidence="12">
    <location>
        <begin position="271"/>
        <end position="273"/>
    </location>
</feature>
<feature type="helix" evidence="12">
    <location>
        <begin position="285"/>
        <end position="289"/>
    </location>
</feature>
<feature type="strand" evidence="12">
    <location>
        <begin position="295"/>
        <end position="297"/>
    </location>
</feature>
<feature type="helix" evidence="12">
    <location>
        <begin position="309"/>
        <end position="313"/>
    </location>
</feature>
<feature type="strand" evidence="12">
    <location>
        <begin position="319"/>
        <end position="321"/>
    </location>
</feature>
<feature type="strand" evidence="12">
    <location>
        <begin position="324"/>
        <end position="327"/>
    </location>
</feature>
<feature type="helix" evidence="12">
    <location>
        <begin position="333"/>
        <end position="337"/>
    </location>
</feature>
<feature type="strand" evidence="12">
    <location>
        <begin position="343"/>
        <end position="345"/>
    </location>
</feature>
<feature type="helix" evidence="12">
    <location>
        <begin position="357"/>
        <end position="361"/>
    </location>
</feature>
<feature type="strand" evidence="12">
    <location>
        <begin position="367"/>
        <end position="369"/>
    </location>
</feature>
<feature type="strand" evidence="12">
    <location>
        <begin position="372"/>
        <end position="378"/>
    </location>
</feature>
<feature type="helix" evidence="12">
    <location>
        <begin position="381"/>
        <end position="384"/>
    </location>
</feature>
<feature type="strand" evidence="12">
    <location>
        <begin position="390"/>
        <end position="393"/>
    </location>
</feature>
<feature type="strand" evidence="12">
    <location>
        <begin position="396"/>
        <end position="402"/>
    </location>
</feature>
<feature type="helix" evidence="12">
    <location>
        <begin position="405"/>
        <end position="409"/>
    </location>
</feature>
<feature type="strand" evidence="12">
    <location>
        <begin position="415"/>
        <end position="417"/>
    </location>
</feature>
<feature type="strand" evidence="12">
    <location>
        <begin position="420"/>
        <end position="426"/>
    </location>
</feature>
<feature type="turn" evidence="12">
    <location>
        <begin position="429"/>
        <end position="432"/>
    </location>
</feature>
<feature type="strand" evidence="12">
    <location>
        <begin position="439"/>
        <end position="441"/>
    </location>
</feature>
<feature type="strand" evidence="12">
    <location>
        <begin position="444"/>
        <end position="449"/>
    </location>
</feature>
<feature type="turn" evidence="12">
    <location>
        <begin position="453"/>
        <end position="458"/>
    </location>
</feature>
<feature type="strand" evidence="12">
    <location>
        <begin position="463"/>
        <end position="465"/>
    </location>
</feature>
<feature type="strand" evidence="12">
    <location>
        <begin position="468"/>
        <end position="470"/>
    </location>
</feature>
<feature type="helix" evidence="12">
    <location>
        <begin position="477"/>
        <end position="481"/>
    </location>
</feature>
<feature type="strand" evidence="12">
    <location>
        <begin position="486"/>
        <end position="489"/>
    </location>
</feature>
<feature type="strand" evidence="12">
    <location>
        <begin position="492"/>
        <end position="497"/>
    </location>
</feature>
<feature type="strand" evidence="12">
    <location>
        <begin position="510"/>
        <end position="512"/>
    </location>
</feature>
<feature type="strand" evidence="12">
    <location>
        <begin position="515"/>
        <end position="521"/>
    </location>
</feature>
<feature type="helix" evidence="12">
    <location>
        <begin position="524"/>
        <end position="528"/>
    </location>
</feature>
<feature type="strand" evidence="12">
    <location>
        <begin position="534"/>
        <end position="536"/>
    </location>
</feature>
<feature type="strand" evidence="12">
    <location>
        <begin position="539"/>
        <end position="544"/>
    </location>
</feature>
<feature type="helix" evidence="12">
    <location>
        <begin position="548"/>
        <end position="552"/>
    </location>
</feature>
<feature type="strand" evidence="12">
    <location>
        <begin position="558"/>
        <end position="560"/>
    </location>
</feature>
<feature type="strand" evidence="12">
    <location>
        <begin position="563"/>
        <end position="568"/>
    </location>
</feature>
<feature type="helix" evidence="12">
    <location>
        <begin position="572"/>
        <end position="576"/>
    </location>
</feature>
<feature type="strand" evidence="12">
    <location>
        <begin position="581"/>
        <end position="584"/>
    </location>
</feature>
<feature type="strand" evidence="12">
    <location>
        <begin position="587"/>
        <end position="590"/>
    </location>
</feature>
<feature type="helix" evidence="12">
    <location>
        <begin position="596"/>
        <end position="600"/>
    </location>
</feature>
<feature type="strand" evidence="12">
    <location>
        <begin position="606"/>
        <end position="608"/>
    </location>
</feature>
<feature type="strand" evidence="12">
    <location>
        <begin position="615"/>
        <end position="618"/>
    </location>
</feature>
<feature type="helix" evidence="12">
    <location>
        <begin position="622"/>
        <end position="624"/>
    </location>
</feature>
<feature type="strand" evidence="12">
    <location>
        <begin position="630"/>
        <end position="632"/>
    </location>
</feature>
<feature type="helix" evidence="12">
    <location>
        <begin position="644"/>
        <end position="647"/>
    </location>
</feature>
<feature type="helix" evidence="12">
    <location>
        <begin position="669"/>
        <end position="673"/>
    </location>
</feature>
<feature type="strand" evidence="12">
    <location>
        <begin position="679"/>
        <end position="681"/>
    </location>
</feature>
<feature type="strand" evidence="12">
    <location>
        <begin position="684"/>
        <end position="687"/>
    </location>
</feature>
<feature type="helix" evidence="12">
    <location>
        <begin position="692"/>
        <end position="696"/>
    </location>
</feature>
<feature type="strand" evidence="12">
    <location>
        <begin position="702"/>
        <end position="704"/>
    </location>
</feature>
<feature type="helix" evidence="12">
    <location>
        <begin position="720"/>
        <end position="724"/>
    </location>
</feature>
<feature type="helix" evidence="12">
    <location>
        <begin position="726"/>
        <end position="729"/>
    </location>
</feature>
<accession>Q9SSL9</accession>
<accession>Q8GZ71</accession>
<accession>Q8L740</accession>
<proteinExistence type="evidence at protein level"/>
<sequence>MKNLGGLFKILLLFFCLFLSTHIISVSCLNSDGLTLLSLLKHLDRVPPQVTSTWKINASEATPCNWFGITCDDSKNVASLNFTRSRVSGQLGPEIGELKSLQILDLSTNNFSGTIPSTLGNCTKLATLDLSENGFSDKIPDTLDSLKRLEVLYLYINFLTGELPESLFRIPKLQVLYLDYNNLTGPIPQSIGDAKELVELSMYANQFSGNIPESIGNSSSLQILYLHRNKLVGSLPESLNLLGNLTTLFVGNNSLQGPVRFGSPNCKNLLTLDLSYNEFEGGVPPALGNCSSLDALVIVSGNLSGTIPSSLGMLKNLTILNLSENRLSGSIPAELGNCSSLNLLKLNDNQLVGGIPSALGKLRKLESLELFENRFSGEIPIEIWKSQSLTQLLVYQNNLTGELPVEMTEMKKLKIATLFNNSFYGAIPPGLGVNSSLEEVDFIGNKLTGEIPPNLCHGRKLRILNLGSNLLHGTIPASIGHCKTIRRFILRENNLSGLLPEFSQDHSLSFLDFNSNNFEGPIPGSLGSCKNLSSINLSRNRFTGQIPPQLGNLQNLGYMNLSRNLLEGSLPAQLSNCVSLERFDVGFNSLNGSVPSNFSNWKGLTTLVLSENRFSGGIPQFLPELKKLSTLQIARNAFGGEIPSSIGLIEDLIYDLDLSGNGLTGEIPAKLGDLIKLTRLNISNNNLTGSLSVLKGLTSLLHVDVSNNQFTGPIPDNLEGQLLSEPSSFSGNPNLCIPHSFSASNNSRSALKYCKDQSKSRKSGLSTWQIVLIAVLSSLLVLVVVLALVFICLRRRKGRPEKDAYVFTQEEGPSLLLNKVLAATDNLNEKYTIGRGAHGIVYRASLGSGKVYAVKRLVFASHIRANQSMMREIDTIGKVRHRNLIKLEGFWLRKDDGLMLYRYMPKGSLYDVLHGVSPKENVLDWSARYNVALGVAHGLAYLHYDCHPPIVHRDIKPENILMDSDLEPHIGDFGLARLLDDSTVSTATVTGTTGYIAPENAFKTVRGRESDVYSYGVVLLELVTRKRAVDKSFPESTDIVSWVRSALSSSNNNVEDMVTTIVDPILVDELLDSSLREQVMQVTELALSCTQQDPAMRPTMRDAVKLLEDVKHLARSCSSDSVR</sequence>
<protein>
    <recommendedName>
        <fullName>Leucine-rich repeat receptor-like protein kinase PEPR1</fullName>
        <ecNumber>2.7.11.1</ecNumber>
    </recommendedName>
    <alternativeName>
        <fullName>Elicitor peptide 1 receptor 1</fullName>
        <shortName>PEP1 receptor 1</shortName>
    </alternativeName>
</protein>
<name>PEPR1_ARATH</name>